<name>RUVC_COXB2</name>
<proteinExistence type="inferred from homology"/>
<organism>
    <name type="scientific">Coxiella burnetii (strain CbuG_Q212)</name>
    <name type="common">Coxiella burnetii (strain Q212)</name>
    <dbReference type="NCBI Taxonomy" id="434923"/>
    <lineage>
        <taxon>Bacteria</taxon>
        <taxon>Pseudomonadati</taxon>
        <taxon>Pseudomonadota</taxon>
        <taxon>Gammaproteobacteria</taxon>
        <taxon>Legionellales</taxon>
        <taxon>Coxiellaceae</taxon>
        <taxon>Coxiella</taxon>
    </lineage>
</organism>
<protein>
    <recommendedName>
        <fullName evidence="1">Crossover junction endodeoxyribonuclease RuvC</fullName>
        <ecNumber evidence="1">3.1.21.10</ecNumber>
    </recommendedName>
    <alternativeName>
        <fullName evidence="1">Holliday junction nuclease RuvC</fullName>
    </alternativeName>
    <alternativeName>
        <fullName evidence="1">Holliday junction resolvase RuvC</fullName>
    </alternativeName>
</protein>
<dbReference type="EC" id="3.1.21.10" evidence="1"/>
<dbReference type="EMBL" id="CP001019">
    <property type="protein sequence ID" value="ACJ17872.1"/>
    <property type="molecule type" value="Genomic_DNA"/>
</dbReference>
<dbReference type="RefSeq" id="WP_010958304.1">
    <property type="nucleotide sequence ID" value="NC_011527.1"/>
</dbReference>
<dbReference type="SMR" id="B6IYU4"/>
<dbReference type="KEGG" id="cbg:CbuG_0445"/>
<dbReference type="HOGENOM" id="CLU_091257_2_1_6"/>
<dbReference type="GO" id="GO:0005737">
    <property type="term" value="C:cytoplasm"/>
    <property type="evidence" value="ECO:0007669"/>
    <property type="project" value="UniProtKB-SubCell"/>
</dbReference>
<dbReference type="GO" id="GO:0048476">
    <property type="term" value="C:Holliday junction resolvase complex"/>
    <property type="evidence" value="ECO:0007669"/>
    <property type="project" value="UniProtKB-UniRule"/>
</dbReference>
<dbReference type="GO" id="GO:0008821">
    <property type="term" value="F:crossover junction DNA endonuclease activity"/>
    <property type="evidence" value="ECO:0007669"/>
    <property type="project" value="UniProtKB-UniRule"/>
</dbReference>
<dbReference type="GO" id="GO:0003677">
    <property type="term" value="F:DNA binding"/>
    <property type="evidence" value="ECO:0007669"/>
    <property type="project" value="UniProtKB-KW"/>
</dbReference>
<dbReference type="GO" id="GO:0000287">
    <property type="term" value="F:magnesium ion binding"/>
    <property type="evidence" value="ECO:0007669"/>
    <property type="project" value="UniProtKB-UniRule"/>
</dbReference>
<dbReference type="GO" id="GO:0006310">
    <property type="term" value="P:DNA recombination"/>
    <property type="evidence" value="ECO:0007669"/>
    <property type="project" value="UniProtKB-UniRule"/>
</dbReference>
<dbReference type="GO" id="GO:0006281">
    <property type="term" value="P:DNA repair"/>
    <property type="evidence" value="ECO:0007669"/>
    <property type="project" value="UniProtKB-UniRule"/>
</dbReference>
<dbReference type="CDD" id="cd16962">
    <property type="entry name" value="RuvC"/>
    <property type="match status" value="1"/>
</dbReference>
<dbReference type="FunFam" id="3.30.420.10:FF:000002">
    <property type="entry name" value="Crossover junction endodeoxyribonuclease RuvC"/>
    <property type="match status" value="1"/>
</dbReference>
<dbReference type="Gene3D" id="3.30.420.10">
    <property type="entry name" value="Ribonuclease H-like superfamily/Ribonuclease H"/>
    <property type="match status" value="1"/>
</dbReference>
<dbReference type="HAMAP" id="MF_00034">
    <property type="entry name" value="RuvC"/>
    <property type="match status" value="1"/>
</dbReference>
<dbReference type="InterPro" id="IPR012337">
    <property type="entry name" value="RNaseH-like_sf"/>
</dbReference>
<dbReference type="InterPro" id="IPR036397">
    <property type="entry name" value="RNaseH_sf"/>
</dbReference>
<dbReference type="InterPro" id="IPR020563">
    <property type="entry name" value="X-over_junc_endoDNase_Mg_BS"/>
</dbReference>
<dbReference type="InterPro" id="IPR002176">
    <property type="entry name" value="X-over_junc_endoDNase_RuvC"/>
</dbReference>
<dbReference type="NCBIfam" id="TIGR00228">
    <property type="entry name" value="ruvC"/>
    <property type="match status" value="1"/>
</dbReference>
<dbReference type="PANTHER" id="PTHR30194">
    <property type="entry name" value="CROSSOVER JUNCTION ENDODEOXYRIBONUCLEASE RUVC"/>
    <property type="match status" value="1"/>
</dbReference>
<dbReference type="PANTHER" id="PTHR30194:SF3">
    <property type="entry name" value="CROSSOVER JUNCTION ENDODEOXYRIBONUCLEASE RUVC"/>
    <property type="match status" value="1"/>
</dbReference>
<dbReference type="Pfam" id="PF02075">
    <property type="entry name" value="RuvC"/>
    <property type="match status" value="1"/>
</dbReference>
<dbReference type="PRINTS" id="PR00696">
    <property type="entry name" value="RSOLVASERUVC"/>
</dbReference>
<dbReference type="SUPFAM" id="SSF53098">
    <property type="entry name" value="Ribonuclease H-like"/>
    <property type="match status" value="1"/>
</dbReference>
<dbReference type="PROSITE" id="PS01321">
    <property type="entry name" value="RUVC"/>
    <property type="match status" value="1"/>
</dbReference>
<feature type="chain" id="PRO_1000090518" description="Crossover junction endodeoxyribonuclease RuvC">
    <location>
        <begin position="1"/>
        <end position="172"/>
    </location>
</feature>
<feature type="active site" evidence="1">
    <location>
        <position position="12"/>
    </location>
</feature>
<feature type="active site" evidence="1">
    <location>
        <position position="71"/>
    </location>
</feature>
<feature type="active site" evidence="1">
    <location>
        <position position="143"/>
    </location>
</feature>
<feature type="binding site" evidence="1">
    <location>
        <position position="12"/>
    </location>
    <ligand>
        <name>Mg(2+)</name>
        <dbReference type="ChEBI" id="CHEBI:18420"/>
        <label>1</label>
    </ligand>
</feature>
<feature type="binding site" evidence="1">
    <location>
        <position position="71"/>
    </location>
    <ligand>
        <name>Mg(2+)</name>
        <dbReference type="ChEBI" id="CHEBI:18420"/>
        <label>2</label>
    </ligand>
</feature>
<feature type="binding site" evidence="1">
    <location>
        <position position="143"/>
    </location>
    <ligand>
        <name>Mg(2+)</name>
        <dbReference type="ChEBI" id="CHEBI:18420"/>
        <label>1</label>
    </ligand>
</feature>
<reference key="1">
    <citation type="journal article" date="2009" name="Infect. Immun.">
        <title>Comparative genomics reveal extensive transposon-mediated genomic plasticity and diversity among potential effector proteins within the genus Coxiella.</title>
        <authorList>
            <person name="Beare P.A."/>
            <person name="Unsworth N."/>
            <person name="Andoh M."/>
            <person name="Voth D.E."/>
            <person name="Omsland A."/>
            <person name="Gilk S.D."/>
            <person name="Williams K.P."/>
            <person name="Sobral B.W."/>
            <person name="Kupko J.J. III"/>
            <person name="Porcella S.F."/>
            <person name="Samuel J.E."/>
            <person name="Heinzen R.A."/>
        </authorList>
    </citation>
    <scope>NUCLEOTIDE SEQUENCE [LARGE SCALE GENOMIC DNA]</scope>
    <source>
        <strain>CbuG_Q212</strain>
    </source>
</reference>
<gene>
    <name evidence="1" type="primary">ruvC</name>
    <name type="ordered locus">CbuG_0445</name>
</gene>
<accession>B6IYU4</accession>
<comment type="function">
    <text evidence="1">The RuvA-RuvB-RuvC complex processes Holliday junction (HJ) DNA during genetic recombination and DNA repair. Endonuclease that resolves HJ intermediates. Cleaves cruciform DNA by making single-stranded nicks across the HJ at symmetrical positions within the homologous arms, yielding a 5'-phosphate and a 3'-hydroxyl group; requires a central core of homology in the junction. The consensus cleavage sequence is 5'-(A/T)TT(C/G)-3'. Cleavage occurs on the 3'-side of the TT dinucleotide at the point of strand exchange. HJ branch migration catalyzed by RuvA-RuvB allows RuvC to scan DNA until it finds its consensus sequence, where it cleaves and resolves the cruciform DNA.</text>
</comment>
<comment type="catalytic activity">
    <reaction evidence="1">
        <text>Endonucleolytic cleavage at a junction such as a reciprocal single-stranded crossover between two homologous DNA duplexes (Holliday junction).</text>
        <dbReference type="EC" id="3.1.21.10"/>
    </reaction>
</comment>
<comment type="cofactor">
    <cofactor evidence="1">
        <name>Mg(2+)</name>
        <dbReference type="ChEBI" id="CHEBI:18420"/>
    </cofactor>
    <text evidence="1">Binds 2 Mg(2+) ion per subunit.</text>
</comment>
<comment type="subunit">
    <text evidence="1">Homodimer which binds Holliday junction (HJ) DNA. The HJ becomes 2-fold symmetrical on binding to RuvC with unstacked arms; it has a different conformation from HJ DNA in complex with RuvA. In the full resolvosome a probable DNA-RuvA(4)-RuvB(12)-RuvC(2) complex forms which resolves the HJ.</text>
</comment>
<comment type="subcellular location">
    <subcellularLocation>
        <location evidence="1">Cytoplasm</location>
    </subcellularLocation>
</comment>
<comment type="similarity">
    <text evidence="1">Belongs to the RuvC family.</text>
</comment>
<sequence>MDNPRRIIIGIDPGSRITGYGIIWSQGSKQGCIAFGQIKTDNDSLNFRLHQIERELRDLILIHRPHEAAIEQVFTFHNHQSALKLGQARGAALVATAACALSVAEYSARQIKQAVVGYGAATKAQVQHMVHLLLQLEKAPPADAADALAIALCHATSSRLSEKLMQAKGTLT</sequence>
<keyword id="KW-0963">Cytoplasm</keyword>
<keyword id="KW-0227">DNA damage</keyword>
<keyword id="KW-0233">DNA recombination</keyword>
<keyword id="KW-0234">DNA repair</keyword>
<keyword id="KW-0238">DNA-binding</keyword>
<keyword id="KW-0255">Endonuclease</keyword>
<keyword id="KW-0378">Hydrolase</keyword>
<keyword id="KW-0460">Magnesium</keyword>
<keyword id="KW-0479">Metal-binding</keyword>
<keyword id="KW-0540">Nuclease</keyword>
<evidence type="ECO:0000255" key="1">
    <source>
        <dbReference type="HAMAP-Rule" id="MF_00034"/>
    </source>
</evidence>